<comment type="function">
    <text evidence="1">Catalyzes the formation of acetyl phosphate from acetate and ATP. Can also catalyze the reverse reaction.</text>
</comment>
<comment type="catalytic activity">
    <reaction evidence="1">
        <text>acetate + ATP = acetyl phosphate + ADP</text>
        <dbReference type="Rhea" id="RHEA:11352"/>
        <dbReference type="ChEBI" id="CHEBI:22191"/>
        <dbReference type="ChEBI" id="CHEBI:30089"/>
        <dbReference type="ChEBI" id="CHEBI:30616"/>
        <dbReference type="ChEBI" id="CHEBI:456216"/>
        <dbReference type="EC" id="2.7.2.1"/>
    </reaction>
</comment>
<comment type="cofactor">
    <cofactor evidence="1">
        <name>Mg(2+)</name>
        <dbReference type="ChEBI" id="CHEBI:18420"/>
    </cofactor>
    <cofactor evidence="1">
        <name>Mn(2+)</name>
        <dbReference type="ChEBI" id="CHEBI:29035"/>
    </cofactor>
    <text evidence="1">Mg(2+). Can also accept Mn(2+).</text>
</comment>
<comment type="pathway">
    <text evidence="1">Metabolic intermediate biosynthesis; acetyl-CoA biosynthesis; acetyl-CoA from acetate: step 1/2.</text>
</comment>
<comment type="subunit">
    <text evidence="1">Homodimer.</text>
</comment>
<comment type="subcellular location">
    <subcellularLocation>
        <location evidence="1">Cytoplasm</location>
    </subcellularLocation>
</comment>
<comment type="similarity">
    <text evidence="1">Belongs to the acetokinase family.</text>
</comment>
<dbReference type="EC" id="2.7.2.1" evidence="1"/>
<dbReference type="EMBL" id="AE002098">
    <property type="protein sequence ID" value="AAF40873.1"/>
    <property type="molecule type" value="Genomic_DNA"/>
</dbReference>
<dbReference type="PIR" id="D81198">
    <property type="entry name" value="D81198"/>
</dbReference>
<dbReference type="RefSeq" id="NP_273483.1">
    <property type="nucleotide sequence ID" value="NC_003112.2"/>
</dbReference>
<dbReference type="RefSeq" id="WP_002222042.1">
    <property type="nucleotide sequence ID" value="NC_003112.2"/>
</dbReference>
<dbReference type="SMR" id="Q9K0X1"/>
<dbReference type="FunCoup" id="Q9K0X1">
    <property type="interactions" value="337"/>
</dbReference>
<dbReference type="STRING" id="122586.NMB0435"/>
<dbReference type="PaxDb" id="122586-NMB0435"/>
<dbReference type="KEGG" id="nme:NMB0435"/>
<dbReference type="PATRIC" id="fig|122586.8.peg.551"/>
<dbReference type="HOGENOM" id="CLU_020352_0_1_4"/>
<dbReference type="InParanoid" id="Q9K0X1"/>
<dbReference type="OrthoDB" id="9802453at2"/>
<dbReference type="UniPathway" id="UPA00340">
    <property type="reaction ID" value="UER00458"/>
</dbReference>
<dbReference type="Proteomes" id="UP000000425">
    <property type="component" value="Chromosome"/>
</dbReference>
<dbReference type="GO" id="GO:0005829">
    <property type="term" value="C:cytosol"/>
    <property type="evidence" value="ECO:0000318"/>
    <property type="project" value="GO_Central"/>
</dbReference>
<dbReference type="GO" id="GO:0008776">
    <property type="term" value="F:acetate kinase activity"/>
    <property type="evidence" value="ECO:0000318"/>
    <property type="project" value="GO_Central"/>
</dbReference>
<dbReference type="GO" id="GO:0005524">
    <property type="term" value="F:ATP binding"/>
    <property type="evidence" value="ECO:0007669"/>
    <property type="project" value="UniProtKB-KW"/>
</dbReference>
<dbReference type="GO" id="GO:0000287">
    <property type="term" value="F:magnesium ion binding"/>
    <property type="evidence" value="ECO:0007669"/>
    <property type="project" value="UniProtKB-UniRule"/>
</dbReference>
<dbReference type="GO" id="GO:0006083">
    <property type="term" value="P:acetate metabolic process"/>
    <property type="evidence" value="ECO:0000318"/>
    <property type="project" value="GO_Central"/>
</dbReference>
<dbReference type="GO" id="GO:0006085">
    <property type="term" value="P:acetyl-CoA biosynthetic process"/>
    <property type="evidence" value="ECO:0007669"/>
    <property type="project" value="UniProtKB-UniRule"/>
</dbReference>
<dbReference type="CDD" id="cd24010">
    <property type="entry name" value="ASKHA_NBD_AcK_PK"/>
    <property type="match status" value="1"/>
</dbReference>
<dbReference type="Gene3D" id="3.30.420.40">
    <property type="match status" value="2"/>
</dbReference>
<dbReference type="HAMAP" id="MF_00020">
    <property type="entry name" value="Acetate_kinase"/>
    <property type="match status" value="1"/>
</dbReference>
<dbReference type="InterPro" id="IPR004372">
    <property type="entry name" value="Ac/propionate_kinase"/>
</dbReference>
<dbReference type="InterPro" id="IPR000890">
    <property type="entry name" value="Aliphatic_acid_kin_short-chain"/>
</dbReference>
<dbReference type="InterPro" id="IPR023865">
    <property type="entry name" value="Aliphatic_acid_kinase_CS"/>
</dbReference>
<dbReference type="InterPro" id="IPR043129">
    <property type="entry name" value="ATPase_NBD"/>
</dbReference>
<dbReference type="NCBIfam" id="TIGR00016">
    <property type="entry name" value="ackA"/>
    <property type="match status" value="1"/>
</dbReference>
<dbReference type="PANTHER" id="PTHR21060">
    <property type="entry name" value="ACETATE KINASE"/>
    <property type="match status" value="1"/>
</dbReference>
<dbReference type="PANTHER" id="PTHR21060:SF21">
    <property type="entry name" value="ACETATE KINASE"/>
    <property type="match status" value="1"/>
</dbReference>
<dbReference type="Pfam" id="PF00871">
    <property type="entry name" value="Acetate_kinase"/>
    <property type="match status" value="1"/>
</dbReference>
<dbReference type="PIRSF" id="PIRSF000722">
    <property type="entry name" value="Acetate_prop_kin"/>
    <property type="match status" value="1"/>
</dbReference>
<dbReference type="PRINTS" id="PR00471">
    <property type="entry name" value="ACETATEKNASE"/>
</dbReference>
<dbReference type="SUPFAM" id="SSF53067">
    <property type="entry name" value="Actin-like ATPase domain"/>
    <property type="match status" value="2"/>
</dbReference>
<dbReference type="PROSITE" id="PS01075">
    <property type="entry name" value="ACETATE_KINASE_1"/>
    <property type="match status" value="1"/>
</dbReference>
<dbReference type="PROSITE" id="PS01076">
    <property type="entry name" value="ACETATE_KINASE_2"/>
    <property type="match status" value="1"/>
</dbReference>
<accession>Q9K0X1</accession>
<keyword id="KW-0067">ATP-binding</keyword>
<keyword id="KW-0963">Cytoplasm</keyword>
<keyword id="KW-0418">Kinase</keyword>
<keyword id="KW-0460">Magnesium</keyword>
<keyword id="KW-0479">Metal-binding</keyword>
<keyword id="KW-0547">Nucleotide-binding</keyword>
<keyword id="KW-1185">Reference proteome</keyword>
<keyword id="KW-0808">Transferase</keyword>
<gene>
    <name evidence="1" type="primary">ackA2</name>
    <name type="ordered locus">NMB0435</name>
</gene>
<evidence type="ECO:0000255" key="1">
    <source>
        <dbReference type="HAMAP-Rule" id="MF_00020"/>
    </source>
</evidence>
<organism>
    <name type="scientific">Neisseria meningitidis serogroup B (strain ATCC BAA-335 / MC58)</name>
    <dbReference type="NCBI Taxonomy" id="122586"/>
    <lineage>
        <taxon>Bacteria</taxon>
        <taxon>Pseudomonadati</taxon>
        <taxon>Pseudomonadota</taxon>
        <taxon>Betaproteobacteria</taxon>
        <taxon>Neisseriales</taxon>
        <taxon>Neisseriaceae</taxon>
        <taxon>Neisseria</taxon>
    </lineage>
</organism>
<protein>
    <recommendedName>
        <fullName evidence="1">Acetate kinase 2</fullName>
        <ecNumber evidence="1">2.7.2.1</ecNumber>
    </recommendedName>
    <alternativeName>
        <fullName evidence="1">Acetokinase 2</fullName>
    </alternativeName>
</protein>
<proteinExistence type="inferred from homology"/>
<reference key="1">
    <citation type="journal article" date="2000" name="Science">
        <title>Complete genome sequence of Neisseria meningitidis serogroup B strain MC58.</title>
        <authorList>
            <person name="Tettelin H."/>
            <person name="Saunders N.J."/>
            <person name="Heidelberg J.F."/>
            <person name="Jeffries A.C."/>
            <person name="Nelson K.E."/>
            <person name="Eisen J.A."/>
            <person name="Ketchum K.A."/>
            <person name="Hood D.W."/>
            <person name="Peden J.F."/>
            <person name="Dodson R.J."/>
            <person name="Nelson W.C."/>
            <person name="Gwinn M.L."/>
            <person name="DeBoy R.T."/>
            <person name="Peterson J.D."/>
            <person name="Hickey E.K."/>
            <person name="Haft D.H."/>
            <person name="Salzberg S.L."/>
            <person name="White O."/>
            <person name="Fleischmann R.D."/>
            <person name="Dougherty B.A."/>
            <person name="Mason T.M."/>
            <person name="Ciecko A."/>
            <person name="Parksey D.S."/>
            <person name="Blair E."/>
            <person name="Cittone H."/>
            <person name="Clark E.B."/>
            <person name="Cotton M.D."/>
            <person name="Utterback T.R."/>
            <person name="Khouri H.M."/>
            <person name="Qin H."/>
            <person name="Vamathevan J.J."/>
            <person name="Gill J."/>
            <person name="Scarlato V."/>
            <person name="Masignani V."/>
            <person name="Pizza M."/>
            <person name="Grandi G."/>
            <person name="Sun L."/>
            <person name="Smith H.O."/>
            <person name="Fraser C.M."/>
            <person name="Moxon E.R."/>
            <person name="Rappuoli R."/>
            <person name="Venter J.C."/>
        </authorList>
    </citation>
    <scope>NUCLEOTIDE SEQUENCE [LARGE SCALE GENOMIC DNA]</scope>
    <source>
        <strain>ATCC BAA-335 / MC58</strain>
    </source>
</reference>
<feature type="chain" id="PRO_0000107593" description="Acetate kinase 2">
    <location>
        <begin position="1"/>
        <end position="399"/>
    </location>
</feature>
<feature type="active site" description="Proton donor/acceptor" evidence="1">
    <location>
        <position position="146"/>
    </location>
</feature>
<feature type="binding site" evidence="1">
    <location>
        <position position="10"/>
    </location>
    <ligand>
        <name>Mg(2+)</name>
        <dbReference type="ChEBI" id="CHEBI:18420"/>
    </ligand>
</feature>
<feature type="binding site" evidence="1">
    <location>
        <position position="17"/>
    </location>
    <ligand>
        <name>ATP</name>
        <dbReference type="ChEBI" id="CHEBI:30616"/>
    </ligand>
</feature>
<feature type="binding site" evidence="1">
    <location>
        <position position="89"/>
    </location>
    <ligand>
        <name>substrate</name>
    </ligand>
</feature>
<feature type="binding site" evidence="1">
    <location>
        <begin position="206"/>
        <end position="210"/>
    </location>
    <ligand>
        <name>ATP</name>
        <dbReference type="ChEBI" id="CHEBI:30616"/>
    </ligand>
</feature>
<feature type="binding site" evidence="1">
    <location>
        <begin position="281"/>
        <end position="283"/>
    </location>
    <ligand>
        <name>ATP</name>
        <dbReference type="ChEBI" id="CHEBI:30616"/>
    </ligand>
</feature>
<feature type="binding site" evidence="1">
    <location>
        <begin position="329"/>
        <end position="333"/>
    </location>
    <ligand>
        <name>ATP</name>
        <dbReference type="ChEBI" id="CHEBI:30616"/>
    </ligand>
</feature>
<feature type="binding site" evidence="1">
    <location>
        <position position="384"/>
    </location>
    <ligand>
        <name>Mg(2+)</name>
        <dbReference type="ChEBI" id="CHEBI:18420"/>
    </ligand>
</feature>
<feature type="site" description="Transition state stabilizer" evidence="1">
    <location>
        <position position="178"/>
    </location>
</feature>
<feature type="site" description="Transition state stabilizer" evidence="1">
    <location>
        <position position="239"/>
    </location>
</feature>
<name>ACKA2_NEIMB</name>
<sequence>MSDQLILVLNCGSSSLKGAVIDRKSGSVVLSCLGERLTTPEAVITFNKDGNKRQVPLSGRNCHAGAVGMLLNELEKHGLHDRIKAIGHRIAHGGEKYSESVLIDQAVMDELNACIPLAPLHNPANISGILAAQEHFPGLPNVGVMDTSFHQTMPERAYTYAVPRELRKKYAFRRYGFHGTSMRYVAPEAARILGKPLEDIRMIIAHLGNGASITAIKNGKSVDTSMGFTPIEGLVMGTRCGDIDPGVYSYLTSHAGMDVAQVDEMLNKKSGLLGISELSNDCRTLEIAADEGHEGARLALEVMTYRLAKYIASMAVGCGGVDALVFTGGIGENSRNIRAKTVSYLDFLGLHIDTKANMEKRYGNSGIISPTDSSPAVLVVPTNEELMIACDTAELAGIL</sequence>